<dbReference type="EMBL" id="CP000387">
    <property type="protein sequence ID" value="ABN45479.1"/>
    <property type="molecule type" value="Genomic_DNA"/>
</dbReference>
<dbReference type="RefSeq" id="WP_002893867.1">
    <property type="nucleotide sequence ID" value="NZ_CAXTYR010000002.1"/>
</dbReference>
<dbReference type="RefSeq" id="YP_001036029.1">
    <property type="nucleotide sequence ID" value="NC_009009.1"/>
</dbReference>
<dbReference type="SMR" id="A3CQM4"/>
<dbReference type="STRING" id="388919.SSA_2111"/>
<dbReference type="GeneID" id="48424707"/>
<dbReference type="KEGG" id="ssa:SSA_2111"/>
<dbReference type="PATRIC" id="fig|388919.9.peg.2001"/>
<dbReference type="eggNOG" id="COG0048">
    <property type="taxonomic scope" value="Bacteria"/>
</dbReference>
<dbReference type="HOGENOM" id="CLU_104295_1_2_9"/>
<dbReference type="OrthoDB" id="9802366at2"/>
<dbReference type="Proteomes" id="UP000002148">
    <property type="component" value="Chromosome"/>
</dbReference>
<dbReference type="GO" id="GO:0015935">
    <property type="term" value="C:small ribosomal subunit"/>
    <property type="evidence" value="ECO:0007669"/>
    <property type="project" value="InterPro"/>
</dbReference>
<dbReference type="GO" id="GO:0019843">
    <property type="term" value="F:rRNA binding"/>
    <property type="evidence" value="ECO:0007669"/>
    <property type="project" value="UniProtKB-UniRule"/>
</dbReference>
<dbReference type="GO" id="GO:0003735">
    <property type="term" value="F:structural constituent of ribosome"/>
    <property type="evidence" value="ECO:0007669"/>
    <property type="project" value="InterPro"/>
</dbReference>
<dbReference type="GO" id="GO:0000049">
    <property type="term" value="F:tRNA binding"/>
    <property type="evidence" value="ECO:0007669"/>
    <property type="project" value="UniProtKB-UniRule"/>
</dbReference>
<dbReference type="GO" id="GO:0006412">
    <property type="term" value="P:translation"/>
    <property type="evidence" value="ECO:0007669"/>
    <property type="project" value="UniProtKB-UniRule"/>
</dbReference>
<dbReference type="CDD" id="cd03368">
    <property type="entry name" value="Ribosomal_S12"/>
    <property type="match status" value="1"/>
</dbReference>
<dbReference type="FunFam" id="2.40.50.140:FF:000001">
    <property type="entry name" value="30S ribosomal protein S12"/>
    <property type="match status" value="1"/>
</dbReference>
<dbReference type="Gene3D" id="2.40.50.140">
    <property type="entry name" value="Nucleic acid-binding proteins"/>
    <property type="match status" value="1"/>
</dbReference>
<dbReference type="HAMAP" id="MF_00403_B">
    <property type="entry name" value="Ribosomal_uS12_B"/>
    <property type="match status" value="1"/>
</dbReference>
<dbReference type="InterPro" id="IPR012340">
    <property type="entry name" value="NA-bd_OB-fold"/>
</dbReference>
<dbReference type="InterPro" id="IPR006032">
    <property type="entry name" value="Ribosomal_uS12"/>
</dbReference>
<dbReference type="InterPro" id="IPR005679">
    <property type="entry name" value="Ribosomal_uS12_bac"/>
</dbReference>
<dbReference type="NCBIfam" id="TIGR00981">
    <property type="entry name" value="rpsL_bact"/>
    <property type="match status" value="1"/>
</dbReference>
<dbReference type="PANTHER" id="PTHR11652">
    <property type="entry name" value="30S RIBOSOMAL PROTEIN S12 FAMILY MEMBER"/>
    <property type="match status" value="1"/>
</dbReference>
<dbReference type="Pfam" id="PF00164">
    <property type="entry name" value="Ribosom_S12_S23"/>
    <property type="match status" value="1"/>
</dbReference>
<dbReference type="PIRSF" id="PIRSF002133">
    <property type="entry name" value="Ribosomal_S12/S23"/>
    <property type="match status" value="1"/>
</dbReference>
<dbReference type="PRINTS" id="PR01034">
    <property type="entry name" value="RIBOSOMALS12"/>
</dbReference>
<dbReference type="SUPFAM" id="SSF50249">
    <property type="entry name" value="Nucleic acid-binding proteins"/>
    <property type="match status" value="1"/>
</dbReference>
<dbReference type="PROSITE" id="PS00055">
    <property type="entry name" value="RIBOSOMAL_S12"/>
    <property type="match status" value="1"/>
</dbReference>
<protein>
    <recommendedName>
        <fullName evidence="2">Small ribosomal subunit protein uS12</fullName>
    </recommendedName>
    <alternativeName>
        <fullName evidence="4">30S ribosomal protein S12</fullName>
    </alternativeName>
</protein>
<name>RS12_STRSV</name>
<feature type="chain" id="PRO_0000296035" description="Small ribosomal subunit protein uS12">
    <location>
        <begin position="1"/>
        <end position="137"/>
    </location>
</feature>
<feature type="region of interest" description="Disordered" evidence="3">
    <location>
        <begin position="1"/>
        <end position="57"/>
    </location>
</feature>
<feature type="modified residue" description="3-methylthioaspartic acid" evidence="1">
    <location>
        <position position="102"/>
    </location>
</feature>
<comment type="function">
    <text evidence="2">With S4 and S5 plays an important role in translational accuracy.</text>
</comment>
<comment type="function">
    <text evidence="2">Interacts with and stabilizes bases of the 16S rRNA that are involved in tRNA selection in the A site and with the mRNA backbone. Located at the interface of the 30S and 50S subunits, it traverses the body of the 30S subunit contacting proteins on the other side and probably holding the rRNA structure together. The combined cluster of proteins S8, S12 and S17 appears to hold together the shoulder and platform of the 30S subunit.</text>
</comment>
<comment type="subunit">
    <text evidence="2">Part of the 30S ribosomal subunit. Contacts proteins S8 and S17. May interact with IF1 in the 30S initiation complex.</text>
</comment>
<comment type="similarity">
    <text evidence="2">Belongs to the universal ribosomal protein uS12 family.</text>
</comment>
<sequence length="137" mass="15103">MPTINQLVRKPRKSKVEKSKSPALNVGYNSHKKVQTNVSSPQKRGVATRVGTMTPKKPNSALRKFARVRLSNLIEVTAYIPGIGHNLQEHSVVLLRGGRVKDLPGVRYHIVRGALDTAGVTDRKQGRSKYGTKKPKA</sequence>
<evidence type="ECO:0000250" key="1"/>
<evidence type="ECO:0000255" key="2">
    <source>
        <dbReference type="HAMAP-Rule" id="MF_00403"/>
    </source>
</evidence>
<evidence type="ECO:0000256" key="3">
    <source>
        <dbReference type="SAM" id="MobiDB-lite"/>
    </source>
</evidence>
<evidence type="ECO:0000305" key="4"/>
<proteinExistence type="inferred from homology"/>
<keyword id="KW-0488">Methylation</keyword>
<keyword id="KW-1185">Reference proteome</keyword>
<keyword id="KW-0687">Ribonucleoprotein</keyword>
<keyword id="KW-0689">Ribosomal protein</keyword>
<keyword id="KW-0694">RNA-binding</keyword>
<keyword id="KW-0699">rRNA-binding</keyword>
<keyword id="KW-0820">tRNA-binding</keyword>
<accession>A3CQM4</accession>
<gene>
    <name evidence="2" type="primary">rpsL</name>
    <name type="ordered locus">SSA_2111</name>
</gene>
<organism>
    <name type="scientific">Streptococcus sanguinis (strain SK36)</name>
    <dbReference type="NCBI Taxonomy" id="388919"/>
    <lineage>
        <taxon>Bacteria</taxon>
        <taxon>Bacillati</taxon>
        <taxon>Bacillota</taxon>
        <taxon>Bacilli</taxon>
        <taxon>Lactobacillales</taxon>
        <taxon>Streptococcaceae</taxon>
        <taxon>Streptococcus</taxon>
    </lineage>
</organism>
<reference key="1">
    <citation type="journal article" date="2007" name="J. Bacteriol.">
        <title>Genome of the opportunistic pathogen Streptococcus sanguinis.</title>
        <authorList>
            <person name="Xu P."/>
            <person name="Alves J.M."/>
            <person name="Kitten T."/>
            <person name="Brown A."/>
            <person name="Chen Z."/>
            <person name="Ozaki L.S."/>
            <person name="Manque P."/>
            <person name="Ge X."/>
            <person name="Serrano M.G."/>
            <person name="Puiu D."/>
            <person name="Hendricks S."/>
            <person name="Wang Y."/>
            <person name="Chaplin M.D."/>
            <person name="Akan D."/>
            <person name="Paik S."/>
            <person name="Peterson D.L."/>
            <person name="Macrina F.L."/>
            <person name="Buck G.A."/>
        </authorList>
    </citation>
    <scope>NUCLEOTIDE SEQUENCE [LARGE SCALE GENOMIC DNA]</scope>
    <source>
        <strain>SK36</strain>
    </source>
</reference>